<dbReference type="EC" id="2.1.1.177" evidence="1"/>
<dbReference type="EMBL" id="CP000247">
    <property type="protein sequence ID" value="ABG68694.1"/>
    <property type="molecule type" value="Genomic_DNA"/>
</dbReference>
<dbReference type="RefSeq" id="WP_000776104.1">
    <property type="nucleotide sequence ID" value="NC_008253.1"/>
</dbReference>
<dbReference type="SMR" id="Q0TK37"/>
<dbReference type="GeneID" id="93776846"/>
<dbReference type="KEGG" id="ecp:ECP_0666"/>
<dbReference type="HOGENOM" id="CLU_100552_1_0_6"/>
<dbReference type="Proteomes" id="UP000009182">
    <property type="component" value="Chromosome"/>
</dbReference>
<dbReference type="GO" id="GO:0005737">
    <property type="term" value="C:cytoplasm"/>
    <property type="evidence" value="ECO:0007669"/>
    <property type="project" value="UniProtKB-SubCell"/>
</dbReference>
<dbReference type="GO" id="GO:0070038">
    <property type="term" value="F:rRNA (pseudouridine-N3-)-methyltransferase activity"/>
    <property type="evidence" value="ECO:0007669"/>
    <property type="project" value="UniProtKB-UniRule"/>
</dbReference>
<dbReference type="CDD" id="cd18081">
    <property type="entry name" value="RlmH-like"/>
    <property type="match status" value="1"/>
</dbReference>
<dbReference type="FunFam" id="3.40.1280.10:FF:000004">
    <property type="entry name" value="Ribosomal RNA large subunit methyltransferase H"/>
    <property type="match status" value="1"/>
</dbReference>
<dbReference type="Gene3D" id="3.40.1280.10">
    <property type="match status" value="1"/>
</dbReference>
<dbReference type="HAMAP" id="MF_00658">
    <property type="entry name" value="23SrRNA_methyltr_H"/>
    <property type="match status" value="1"/>
</dbReference>
<dbReference type="InterPro" id="IPR029028">
    <property type="entry name" value="Alpha/beta_knot_MTases"/>
</dbReference>
<dbReference type="InterPro" id="IPR003742">
    <property type="entry name" value="RlmH-like"/>
</dbReference>
<dbReference type="InterPro" id="IPR029026">
    <property type="entry name" value="tRNA_m1G_MTases_N"/>
</dbReference>
<dbReference type="NCBIfam" id="NF000984">
    <property type="entry name" value="PRK00103.1-1"/>
    <property type="match status" value="1"/>
</dbReference>
<dbReference type="NCBIfam" id="NF000986">
    <property type="entry name" value="PRK00103.1-4"/>
    <property type="match status" value="1"/>
</dbReference>
<dbReference type="NCBIfam" id="TIGR00246">
    <property type="entry name" value="tRNA_RlmH_YbeA"/>
    <property type="match status" value="1"/>
</dbReference>
<dbReference type="PANTHER" id="PTHR33603">
    <property type="entry name" value="METHYLTRANSFERASE"/>
    <property type="match status" value="1"/>
</dbReference>
<dbReference type="PANTHER" id="PTHR33603:SF1">
    <property type="entry name" value="RIBOSOMAL RNA LARGE SUBUNIT METHYLTRANSFERASE H"/>
    <property type="match status" value="1"/>
</dbReference>
<dbReference type="Pfam" id="PF02590">
    <property type="entry name" value="SPOUT_MTase"/>
    <property type="match status" value="1"/>
</dbReference>
<dbReference type="PIRSF" id="PIRSF004505">
    <property type="entry name" value="MT_bac"/>
    <property type="match status" value="1"/>
</dbReference>
<dbReference type="SUPFAM" id="SSF75217">
    <property type="entry name" value="alpha/beta knot"/>
    <property type="match status" value="1"/>
</dbReference>
<protein>
    <recommendedName>
        <fullName evidence="1">Ribosomal RNA large subunit methyltransferase H</fullName>
        <ecNumber evidence="1">2.1.1.177</ecNumber>
    </recommendedName>
    <alternativeName>
        <fullName evidence="1">23S rRNA (pseudouridine1915-N3)-methyltransferase</fullName>
    </alternativeName>
    <alternativeName>
        <fullName evidence="1">23S rRNA m3Psi1915 methyltransferase</fullName>
    </alternativeName>
    <alternativeName>
        <fullName evidence="1">rRNA (pseudouridine-N3-)-methyltransferase RlmH</fullName>
    </alternativeName>
</protein>
<evidence type="ECO:0000255" key="1">
    <source>
        <dbReference type="HAMAP-Rule" id="MF_00658"/>
    </source>
</evidence>
<feature type="chain" id="PRO_0000260555" description="Ribosomal RNA large subunit methyltransferase H">
    <location>
        <begin position="1"/>
        <end position="155"/>
    </location>
</feature>
<feature type="binding site" evidence="1">
    <location>
        <position position="72"/>
    </location>
    <ligand>
        <name>S-adenosyl-L-methionine</name>
        <dbReference type="ChEBI" id="CHEBI:59789"/>
    </ligand>
</feature>
<feature type="binding site" evidence="1">
    <location>
        <position position="103"/>
    </location>
    <ligand>
        <name>S-adenosyl-L-methionine</name>
        <dbReference type="ChEBI" id="CHEBI:59789"/>
    </ligand>
</feature>
<feature type="binding site" evidence="1">
    <location>
        <begin position="122"/>
        <end position="127"/>
    </location>
    <ligand>
        <name>S-adenosyl-L-methionine</name>
        <dbReference type="ChEBI" id="CHEBI:59789"/>
    </ligand>
</feature>
<gene>
    <name evidence="1" type="primary">rlmH</name>
    <name type="ordered locus">ECP_0666</name>
</gene>
<organism>
    <name type="scientific">Escherichia coli O6:K15:H31 (strain 536 / UPEC)</name>
    <dbReference type="NCBI Taxonomy" id="362663"/>
    <lineage>
        <taxon>Bacteria</taxon>
        <taxon>Pseudomonadati</taxon>
        <taxon>Pseudomonadota</taxon>
        <taxon>Gammaproteobacteria</taxon>
        <taxon>Enterobacterales</taxon>
        <taxon>Enterobacteriaceae</taxon>
        <taxon>Escherichia</taxon>
    </lineage>
</organism>
<comment type="function">
    <text evidence="1">Specifically methylates the pseudouridine at position 1915 (m3Psi1915) in 23S rRNA.</text>
</comment>
<comment type="catalytic activity">
    <reaction evidence="1">
        <text>pseudouridine(1915) in 23S rRNA + S-adenosyl-L-methionine = N(3)-methylpseudouridine(1915) in 23S rRNA + S-adenosyl-L-homocysteine + H(+)</text>
        <dbReference type="Rhea" id="RHEA:42752"/>
        <dbReference type="Rhea" id="RHEA-COMP:10221"/>
        <dbReference type="Rhea" id="RHEA-COMP:10222"/>
        <dbReference type="ChEBI" id="CHEBI:15378"/>
        <dbReference type="ChEBI" id="CHEBI:57856"/>
        <dbReference type="ChEBI" id="CHEBI:59789"/>
        <dbReference type="ChEBI" id="CHEBI:65314"/>
        <dbReference type="ChEBI" id="CHEBI:74486"/>
        <dbReference type="EC" id="2.1.1.177"/>
    </reaction>
</comment>
<comment type="subunit">
    <text evidence="1">Homodimer.</text>
</comment>
<comment type="subcellular location">
    <subcellularLocation>
        <location evidence="1">Cytoplasm</location>
    </subcellularLocation>
</comment>
<comment type="similarity">
    <text evidence="1">Belongs to the RNA methyltransferase RlmH family.</text>
</comment>
<sequence length="155" mass="17341">MKLQLVAVGTKMPDWVQTGFTEYLRRFPKDMPFELIEIPAGKRGKNADIKRILDKEGEQMLAAAGKNRIVTLDIPGKPWDTPQLAAELERWKLDGRDVSLLIGGPEGLSPACKAAAEQSWSLSALTLPHPLVRVLVAESLYRAWSITTNHPYHRE</sequence>
<keyword id="KW-0963">Cytoplasm</keyword>
<keyword id="KW-0489">Methyltransferase</keyword>
<keyword id="KW-0698">rRNA processing</keyword>
<keyword id="KW-0949">S-adenosyl-L-methionine</keyword>
<keyword id="KW-0808">Transferase</keyword>
<accession>Q0TK37</accession>
<proteinExistence type="inferred from homology"/>
<name>RLMH_ECOL5</name>
<reference key="1">
    <citation type="journal article" date="2006" name="Mol. Microbiol.">
        <title>Role of pathogenicity island-associated integrases in the genome plasticity of uropathogenic Escherichia coli strain 536.</title>
        <authorList>
            <person name="Hochhut B."/>
            <person name="Wilde C."/>
            <person name="Balling G."/>
            <person name="Middendorf B."/>
            <person name="Dobrindt U."/>
            <person name="Brzuszkiewicz E."/>
            <person name="Gottschalk G."/>
            <person name="Carniel E."/>
            <person name="Hacker J."/>
        </authorList>
    </citation>
    <scope>NUCLEOTIDE SEQUENCE [LARGE SCALE GENOMIC DNA]</scope>
    <source>
        <strain>536 / UPEC</strain>
    </source>
</reference>